<proteinExistence type="inferred from homology"/>
<gene>
    <name evidence="1" type="primary">pyrB</name>
    <name type="ordered locus">Krad_3005</name>
</gene>
<keyword id="KW-0665">Pyrimidine biosynthesis</keyword>
<keyword id="KW-1185">Reference proteome</keyword>
<keyword id="KW-0808">Transferase</keyword>
<name>PYRB_KINRD</name>
<evidence type="ECO:0000255" key="1">
    <source>
        <dbReference type="HAMAP-Rule" id="MF_00001"/>
    </source>
</evidence>
<evidence type="ECO:0000305" key="2"/>
<accession>A6WCD0</accession>
<organism>
    <name type="scientific">Kineococcus radiotolerans (strain ATCC BAA-149 / DSM 14245 / SRS30216)</name>
    <dbReference type="NCBI Taxonomy" id="266940"/>
    <lineage>
        <taxon>Bacteria</taxon>
        <taxon>Bacillati</taxon>
        <taxon>Actinomycetota</taxon>
        <taxon>Actinomycetes</taxon>
        <taxon>Kineosporiales</taxon>
        <taxon>Kineosporiaceae</taxon>
        <taxon>Kineococcus</taxon>
    </lineage>
</organism>
<reference key="1">
    <citation type="journal article" date="2008" name="PLoS ONE">
        <title>Survival in nuclear waste, extreme resistance, and potential applications gleaned from the genome sequence of Kineococcus radiotolerans SRS30216.</title>
        <authorList>
            <person name="Bagwell C.E."/>
            <person name="Bhat S."/>
            <person name="Hawkins G.M."/>
            <person name="Smith B.W."/>
            <person name="Biswas T."/>
            <person name="Hoover T.R."/>
            <person name="Saunders E."/>
            <person name="Han C.S."/>
            <person name="Tsodikov O.V."/>
            <person name="Shimkets L.J."/>
        </authorList>
    </citation>
    <scope>NUCLEOTIDE SEQUENCE [LARGE SCALE GENOMIC DNA]</scope>
    <source>
        <strain>ATCC BAA-149 / DSM 14245 / SRS30216</strain>
    </source>
</reference>
<protein>
    <recommendedName>
        <fullName evidence="1">Aspartate carbamoyltransferase catalytic subunit</fullName>
        <ecNumber evidence="1">2.1.3.2</ecNumber>
    </recommendedName>
    <alternativeName>
        <fullName evidence="1">Aspartate transcarbamylase</fullName>
        <shortName evidence="1">ATCase</shortName>
    </alternativeName>
</protein>
<sequence>MRHLLSAADLDRDAAVRVLDVAEEMAATQRREIKKLPTLRGRTVVNLFFEDSTRTRTSFEAAAKRLSADVINFSAKGSSVSKGESLKDTALTLEAMGADAVVVRHGSSGAPHRLAHAGWTRGAVVNAGDGTHEHPTQALLDAYTMRRHLTSGAGDLTGARVVIVGDVLHSRVARSNVLLLRTLGAHVTLVAPPTLLPVGVESWPCATSHDLDAALRDGAPDAVMMLRVQAERMDASKGSFFPSAREYGRRYGLGRQRLALLPEHTIVMHPGPMNRGLEISAEAADSARSTIVEQVGNGVAVRMAVLYLLLAGELPGGDA</sequence>
<comment type="function">
    <text evidence="1">Catalyzes the condensation of carbamoyl phosphate and aspartate to form carbamoyl aspartate and inorganic phosphate, the committed step in the de novo pyrimidine nucleotide biosynthesis pathway.</text>
</comment>
<comment type="catalytic activity">
    <reaction evidence="1">
        <text>carbamoyl phosphate + L-aspartate = N-carbamoyl-L-aspartate + phosphate + H(+)</text>
        <dbReference type="Rhea" id="RHEA:20013"/>
        <dbReference type="ChEBI" id="CHEBI:15378"/>
        <dbReference type="ChEBI" id="CHEBI:29991"/>
        <dbReference type="ChEBI" id="CHEBI:32814"/>
        <dbReference type="ChEBI" id="CHEBI:43474"/>
        <dbReference type="ChEBI" id="CHEBI:58228"/>
        <dbReference type="EC" id="2.1.3.2"/>
    </reaction>
</comment>
<comment type="pathway">
    <text evidence="1">Pyrimidine metabolism; UMP biosynthesis via de novo pathway; (S)-dihydroorotate from bicarbonate: step 2/3.</text>
</comment>
<comment type="subunit">
    <text evidence="1">Heterododecamer (2C3:3R2) of six catalytic PyrB chains organized as two trimers (C3), and six regulatory PyrI chains organized as three dimers (R2).</text>
</comment>
<comment type="similarity">
    <text evidence="1">Belongs to the aspartate/ornithine carbamoyltransferase superfamily. ATCase family.</text>
</comment>
<comment type="sequence caution" evidence="2">
    <conflict type="erroneous initiation">
        <sequence resource="EMBL-CDS" id="ABS04469"/>
    </conflict>
</comment>
<feature type="chain" id="PRO_0000329107" description="Aspartate carbamoyltransferase catalytic subunit">
    <location>
        <begin position="1"/>
        <end position="319"/>
    </location>
</feature>
<feature type="binding site" evidence="1">
    <location>
        <position position="54"/>
    </location>
    <ligand>
        <name>carbamoyl phosphate</name>
        <dbReference type="ChEBI" id="CHEBI:58228"/>
    </ligand>
</feature>
<feature type="binding site" evidence="1">
    <location>
        <position position="55"/>
    </location>
    <ligand>
        <name>carbamoyl phosphate</name>
        <dbReference type="ChEBI" id="CHEBI:58228"/>
    </ligand>
</feature>
<feature type="binding site" evidence="1">
    <location>
        <position position="82"/>
    </location>
    <ligand>
        <name>L-aspartate</name>
        <dbReference type="ChEBI" id="CHEBI:29991"/>
    </ligand>
</feature>
<feature type="binding site" evidence="1">
    <location>
        <position position="104"/>
    </location>
    <ligand>
        <name>carbamoyl phosphate</name>
        <dbReference type="ChEBI" id="CHEBI:58228"/>
    </ligand>
</feature>
<feature type="binding site" evidence="1">
    <location>
        <position position="134"/>
    </location>
    <ligand>
        <name>carbamoyl phosphate</name>
        <dbReference type="ChEBI" id="CHEBI:58228"/>
    </ligand>
</feature>
<feature type="binding site" evidence="1">
    <location>
        <position position="137"/>
    </location>
    <ligand>
        <name>carbamoyl phosphate</name>
        <dbReference type="ChEBI" id="CHEBI:58228"/>
    </ligand>
</feature>
<feature type="binding site" evidence="1">
    <location>
        <position position="171"/>
    </location>
    <ligand>
        <name>L-aspartate</name>
        <dbReference type="ChEBI" id="CHEBI:29991"/>
    </ligand>
</feature>
<feature type="binding site" evidence="1">
    <location>
        <position position="227"/>
    </location>
    <ligand>
        <name>L-aspartate</name>
        <dbReference type="ChEBI" id="CHEBI:29991"/>
    </ligand>
</feature>
<feature type="binding site" evidence="1">
    <location>
        <position position="271"/>
    </location>
    <ligand>
        <name>carbamoyl phosphate</name>
        <dbReference type="ChEBI" id="CHEBI:58228"/>
    </ligand>
</feature>
<feature type="binding site" evidence="1">
    <location>
        <position position="272"/>
    </location>
    <ligand>
        <name>carbamoyl phosphate</name>
        <dbReference type="ChEBI" id="CHEBI:58228"/>
    </ligand>
</feature>
<dbReference type="EC" id="2.1.3.2" evidence="1"/>
<dbReference type="EMBL" id="CP000750">
    <property type="protein sequence ID" value="ABS04469.1"/>
    <property type="status" value="ALT_INIT"/>
    <property type="molecule type" value="Genomic_DNA"/>
</dbReference>
<dbReference type="SMR" id="A6WCD0"/>
<dbReference type="STRING" id="266940.Krad_3005"/>
<dbReference type="KEGG" id="kra:Krad_3005"/>
<dbReference type="eggNOG" id="COG0540">
    <property type="taxonomic scope" value="Bacteria"/>
</dbReference>
<dbReference type="HOGENOM" id="CLU_043846_2_0_11"/>
<dbReference type="OrthoDB" id="9774690at2"/>
<dbReference type="UniPathway" id="UPA00070">
    <property type="reaction ID" value="UER00116"/>
</dbReference>
<dbReference type="Proteomes" id="UP000001116">
    <property type="component" value="Chromosome"/>
</dbReference>
<dbReference type="GO" id="GO:0005829">
    <property type="term" value="C:cytosol"/>
    <property type="evidence" value="ECO:0007669"/>
    <property type="project" value="TreeGrafter"/>
</dbReference>
<dbReference type="GO" id="GO:0016597">
    <property type="term" value="F:amino acid binding"/>
    <property type="evidence" value="ECO:0007669"/>
    <property type="project" value="InterPro"/>
</dbReference>
<dbReference type="GO" id="GO:0004070">
    <property type="term" value="F:aspartate carbamoyltransferase activity"/>
    <property type="evidence" value="ECO:0007669"/>
    <property type="project" value="UniProtKB-UniRule"/>
</dbReference>
<dbReference type="GO" id="GO:0006207">
    <property type="term" value="P:'de novo' pyrimidine nucleobase biosynthetic process"/>
    <property type="evidence" value="ECO:0007669"/>
    <property type="project" value="InterPro"/>
</dbReference>
<dbReference type="GO" id="GO:0044205">
    <property type="term" value="P:'de novo' UMP biosynthetic process"/>
    <property type="evidence" value="ECO:0007669"/>
    <property type="project" value="UniProtKB-UniRule"/>
</dbReference>
<dbReference type="GO" id="GO:0006520">
    <property type="term" value="P:amino acid metabolic process"/>
    <property type="evidence" value="ECO:0007669"/>
    <property type="project" value="InterPro"/>
</dbReference>
<dbReference type="FunFam" id="3.40.50.1370:FF:000007">
    <property type="entry name" value="Aspartate carbamoyltransferase"/>
    <property type="match status" value="1"/>
</dbReference>
<dbReference type="FunFam" id="3.40.50.1370:FF:000012">
    <property type="entry name" value="Aspartate carbamoyltransferase"/>
    <property type="match status" value="1"/>
</dbReference>
<dbReference type="Gene3D" id="3.40.50.1370">
    <property type="entry name" value="Aspartate/ornithine carbamoyltransferase"/>
    <property type="match status" value="2"/>
</dbReference>
<dbReference type="HAMAP" id="MF_00001">
    <property type="entry name" value="Asp_carb_tr"/>
    <property type="match status" value="1"/>
</dbReference>
<dbReference type="InterPro" id="IPR006132">
    <property type="entry name" value="Asp/Orn_carbamoyltranf_P-bd"/>
</dbReference>
<dbReference type="InterPro" id="IPR006130">
    <property type="entry name" value="Asp/Orn_carbamoylTrfase"/>
</dbReference>
<dbReference type="InterPro" id="IPR036901">
    <property type="entry name" value="Asp/Orn_carbamoylTrfase_sf"/>
</dbReference>
<dbReference type="InterPro" id="IPR002082">
    <property type="entry name" value="Asp_carbamoyltransf"/>
</dbReference>
<dbReference type="InterPro" id="IPR006131">
    <property type="entry name" value="Asp_carbamoyltransf_Asp/Orn-bd"/>
</dbReference>
<dbReference type="NCBIfam" id="TIGR00670">
    <property type="entry name" value="asp_carb_tr"/>
    <property type="match status" value="1"/>
</dbReference>
<dbReference type="NCBIfam" id="NF002032">
    <property type="entry name" value="PRK00856.1"/>
    <property type="match status" value="1"/>
</dbReference>
<dbReference type="PANTHER" id="PTHR45753:SF6">
    <property type="entry name" value="ASPARTATE CARBAMOYLTRANSFERASE"/>
    <property type="match status" value="1"/>
</dbReference>
<dbReference type="PANTHER" id="PTHR45753">
    <property type="entry name" value="ORNITHINE CARBAMOYLTRANSFERASE, MITOCHONDRIAL"/>
    <property type="match status" value="1"/>
</dbReference>
<dbReference type="Pfam" id="PF00185">
    <property type="entry name" value="OTCace"/>
    <property type="match status" value="1"/>
</dbReference>
<dbReference type="Pfam" id="PF02729">
    <property type="entry name" value="OTCace_N"/>
    <property type="match status" value="1"/>
</dbReference>
<dbReference type="PRINTS" id="PR00100">
    <property type="entry name" value="AOTCASE"/>
</dbReference>
<dbReference type="PRINTS" id="PR00101">
    <property type="entry name" value="ATCASE"/>
</dbReference>
<dbReference type="SUPFAM" id="SSF53671">
    <property type="entry name" value="Aspartate/ornithine carbamoyltransferase"/>
    <property type="match status" value="1"/>
</dbReference>
<dbReference type="PROSITE" id="PS00097">
    <property type="entry name" value="CARBAMOYLTRANSFERASE"/>
    <property type="match status" value="1"/>
</dbReference>